<proteinExistence type="inferred from homology"/>
<feature type="chain" id="PRO_1000088034" description="HTH-type transcriptional regulator YidZ">
    <location>
        <begin position="1"/>
        <end position="319"/>
    </location>
</feature>
<feature type="domain" description="HTH lysR-type" evidence="1">
    <location>
        <begin position="8"/>
        <end position="65"/>
    </location>
</feature>
<feature type="DNA-binding region" description="H-T-H motif" evidence="1">
    <location>
        <begin position="25"/>
        <end position="44"/>
    </location>
</feature>
<protein>
    <recommendedName>
        <fullName evidence="1">HTH-type transcriptional regulator YidZ</fullName>
    </recommendedName>
</protein>
<accession>B1IX27</accession>
<name>YIDZ_ECOLC</name>
<gene>
    <name evidence="1" type="primary">yidZ</name>
    <name type="ordered locus">EcolC_4283</name>
</gene>
<evidence type="ECO:0000255" key="1">
    <source>
        <dbReference type="HAMAP-Rule" id="MF_01607"/>
    </source>
</evidence>
<evidence type="ECO:0000305" key="2"/>
<reference key="1">
    <citation type="submission" date="2008-02" db="EMBL/GenBank/DDBJ databases">
        <title>Complete sequence of Escherichia coli C str. ATCC 8739.</title>
        <authorList>
            <person name="Copeland A."/>
            <person name="Lucas S."/>
            <person name="Lapidus A."/>
            <person name="Glavina del Rio T."/>
            <person name="Dalin E."/>
            <person name="Tice H."/>
            <person name="Bruce D."/>
            <person name="Goodwin L."/>
            <person name="Pitluck S."/>
            <person name="Kiss H."/>
            <person name="Brettin T."/>
            <person name="Detter J.C."/>
            <person name="Han C."/>
            <person name="Kuske C.R."/>
            <person name="Schmutz J."/>
            <person name="Larimer F."/>
            <person name="Land M."/>
            <person name="Hauser L."/>
            <person name="Kyrpides N."/>
            <person name="Mikhailova N."/>
            <person name="Ingram L."/>
            <person name="Richardson P."/>
        </authorList>
    </citation>
    <scope>NUCLEOTIDE SEQUENCE [LARGE SCALE GENOMIC DNA]</scope>
    <source>
        <strain>ATCC 8739 / DSM 1576 / NBRC 3972 / NCIMB 8545 / WDCM 00012 / Crooks</strain>
    </source>
</reference>
<organism>
    <name type="scientific">Escherichia coli (strain ATCC 8739 / DSM 1576 / NBRC 3972 / NCIMB 8545 / WDCM 00012 / Crooks)</name>
    <dbReference type="NCBI Taxonomy" id="481805"/>
    <lineage>
        <taxon>Bacteria</taxon>
        <taxon>Pseudomonadati</taxon>
        <taxon>Pseudomonadota</taxon>
        <taxon>Gammaproteobacteria</taxon>
        <taxon>Enterobacterales</taxon>
        <taxon>Enterobacteriaceae</taxon>
        <taxon>Escherichia</taxon>
    </lineage>
</organism>
<comment type="function">
    <text evidence="1">Involved in anaerobic NO protection.</text>
</comment>
<comment type="similarity">
    <text evidence="2">Belongs to the LysR transcriptional regulatory family.</text>
</comment>
<dbReference type="EMBL" id="CP000946">
    <property type="protein sequence ID" value="ACA79879.1"/>
    <property type="molecule type" value="Genomic_DNA"/>
</dbReference>
<dbReference type="RefSeq" id="WP_000748502.1">
    <property type="nucleotide sequence ID" value="NZ_MTFT01000013.1"/>
</dbReference>
<dbReference type="SMR" id="B1IX27"/>
<dbReference type="GeneID" id="93778452"/>
<dbReference type="KEGG" id="ecl:EcolC_4283"/>
<dbReference type="HOGENOM" id="CLU_039613_39_2_6"/>
<dbReference type="GO" id="GO:0003677">
    <property type="term" value="F:DNA binding"/>
    <property type="evidence" value="ECO:0007669"/>
    <property type="project" value="UniProtKB-KW"/>
</dbReference>
<dbReference type="GO" id="GO:0003700">
    <property type="term" value="F:DNA-binding transcription factor activity"/>
    <property type="evidence" value="ECO:0007669"/>
    <property type="project" value="UniProtKB-UniRule"/>
</dbReference>
<dbReference type="CDD" id="cd08417">
    <property type="entry name" value="PBP2_Nitroaromatics_like"/>
    <property type="match status" value="1"/>
</dbReference>
<dbReference type="FunFam" id="3.40.190.10:FF:000092">
    <property type="entry name" value="HTH-type transcriptional regulator YidZ"/>
    <property type="match status" value="1"/>
</dbReference>
<dbReference type="Gene3D" id="3.40.190.10">
    <property type="entry name" value="Periplasmic binding protein-like II"/>
    <property type="match status" value="2"/>
</dbReference>
<dbReference type="Gene3D" id="1.10.10.10">
    <property type="entry name" value="Winged helix-like DNA-binding domain superfamily/Winged helix DNA-binding domain"/>
    <property type="match status" value="1"/>
</dbReference>
<dbReference type="HAMAP" id="MF_01607">
    <property type="entry name" value="HTH_type_YidZ"/>
    <property type="match status" value="1"/>
</dbReference>
<dbReference type="InterPro" id="IPR050389">
    <property type="entry name" value="LysR-type_TF"/>
</dbReference>
<dbReference type="InterPro" id="IPR005119">
    <property type="entry name" value="LysR_subst-bd"/>
</dbReference>
<dbReference type="InterPro" id="IPR000847">
    <property type="entry name" value="Tscrpt_reg_HTH_LysR"/>
</dbReference>
<dbReference type="InterPro" id="IPR023746">
    <property type="entry name" value="Tscrpt_reg_YidZ"/>
</dbReference>
<dbReference type="InterPro" id="IPR036388">
    <property type="entry name" value="WH-like_DNA-bd_sf"/>
</dbReference>
<dbReference type="InterPro" id="IPR036390">
    <property type="entry name" value="WH_DNA-bd_sf"/>
</dbReference>
<dbReference type="InterPro" id="IPR037402">
    <property type="entry name" value="YidZ_PBP2"/>
</dbReference>
<dbReference type="NCBIfam" id="NF007581">
    <property type="entry name" value="PRK10216.1"/>
    <property type="match status" value="1"/>
</dbReference>
<dbReference type="PANTHER" id="PTHR30118">
    <property type="entry name" value="HTH-TYPE TRANSCRIPTIONAL REGULATOR LEUO-RELATED"/>
    <property type="match status" value="1"/>
</dbReference>
<dbReference type="PANTHER" id="PTHR30118:SF11">
    <property type="entry name" value="HTH-TYPE TRANSCRIPTIONAL REGULATOR YIDZ"/>
    <property type="match status" value="1"/>
</dbReference>
<dbReference type="Pfam" id="PF00126">
    <property type="entry name" value="HTH_1"/>
    <property type="match status" value="1"/>
</dbReference>
<dbReference type="Pfam" id="PF03466">
    <property type="entry name" value="LysR_substrate"/>
    <property type="match status" value="1"/>
</dbReference>
<dbReference type="SUPFAM" id="SSF53850">
    <property type="entry name" value="Periplasmic binding protein-like II"/>
    <property type="match status" value="1"/>
</dbReference>
<dbReference type="SUPFAM" id="SSF46785">
    <property type="entry name" value="Winged helix' DNA-binding domain"/>
    <property type="match status" value="1"/>
</dbReference>
<dbReference type="PROSITE" id="PS50931">
    <property type="entry name" value="HTH_LYSR"/>
    <property type="match status" value="1"/>
</dbReference>
<keyword id="KW-0238">DNA-binding</keyword>
<keyword id="KW-0804">Transcription</keyword>
<keyword id="KW-0805">Transcription regulation</keyword>
<sequence length="319" mass="36929">MKKSITTLDLNLLLCLQLLMQERSVTKAAKRMNVTPSAVSKSLAKLRAWFDDPLFVNSPLGLSPTPLMVSMEQNLAEWMQMSNLLLDKPHHQTPRGLKFELAAESPLMMIMLNALSKRIYQRYPQATIKLRNWDYDSLDAITRGEVDIGFSGRESHPRSRELLSSLPLAIDYEVLFSDVPCVWLRKDHPALHETWNLDTFLRYPHISICWEQSDTWALDNVLQELGRERTIAMSLPEFEQSLFMAAQPDNLLLATAPRYCQYYNQLHQLPLVALPLPFDESQQKKLEVPFTLLWHKRNSHNPKIVWLRETIKNLYASMA</sequence>